<accession>Q9Y7M3</accession>
<evidence type="ECO:0000250" key="1">
    <source>
        <dbReference type="UniProtKB" id="P53191"/>
    </source>
</evidence>
<evidence type="ECO:0000255" key="2">
    <source>
        <dbReference type="PROSITE-ProRule" id="PRU00091"/>
    </source>
</evidence>
<evidence type="ECO:0000256" key="3">
    <source>
        <dbReference type="SAM" id="MobiDB-lite"/>
    </source>
</evidence>
<evidence type="ECO:0000269" key="4">
    <source>
    </source>
</evidence>
<evidence type="ECO:0000269" key="5">
    <source>
    </source>
</evidence>
<evidence type="ECO:0000312" key="6">
    <source>
        <dbReference type="PomBase" id="SPBC9B6.03"/>
    </source>
</evidence>
<dbReference type="EMBL" id="CU329671">
    <property type="protein sequence ID" value="CAB42364.1"/>
    <property type="molecule type" value="Genomic_DNA"/>
</dbReference>
<dbReference type="PIR" id="T40784">
    <property type="entry name" value="T40784"/>
</dbReference>
<dbReference type="RefSeq" id="NP_595745.1">
    <property type="nucleotide sequence ID" value="NM_001021645.2"/>
</dbReference>
<dbReference type="SMR" id="Q9Y7M3"/>
<dbReference type="BioGRID" id="276741">
    <property type="interactions" value="41"/>
</dbReference>
<dbReference type="FunCoup" id="Q9Y7M3">
    <property type="interactions" value="16"/>
</dbReference>
<dbReference type="STRING" id="284812.Q9Y7M3"/>
<dbReference type="iPTMnet" id="Q9Y7M3"/>
<dbReference type="PaxDb" id="4896-SPBC9B6.03.1"/>
<dbReference type="EnsemblFungi" id="SPBC9B6.03.1">
    <property type="protein sequence ID" value="SPBC9B6.03.1:pep"/>
    <property type="gene ID" value="SPBC9B6.03"/>
</dbReference>
<dbReference type="GeneID" id="2540208"/>
<dbReference type="KEGG" id="spo:2540208"/>
<dbReference type="PomBase" id="SPBC9B6.03">
    <property type="gene designation" value="pib2"/>
</dbReference>
<dbReference type="VEuPathDB" id="FungiDB:SPBC9B6.03"/>
<dbReference type="eggNOG" id="KOG1729">
    <property type="taxonomic scope" value="Eukaryota"/>
</dbReference>
<dbReference type="HOGENOM" id="CLU_987501_0_0_1"/>
<dbReference type="InParanoid" id="Q9Y7M3"/>
<dbReference type="OMA" id="HIDSTME"/>
<dbReference type="PhylomeDB" id="Q9Y7M3"/>
<dbReference type="PRO" id="PR:Q9Y7M3"/>
<dbReference type="Proteomes" id="UP000002485">
    <property type="component" value="Chromosome II"/>
</dbReference>
<dbReference type="GO" id="GO:0000324">
    <property type="term" value="C:fungal-type vacuole"/>
    <property type="evidence" value="ECO:0007005"/>
    <property type="project" value="PomBase"/>
</dbReference>
<dbReference type="GO" id="GO:0005774">
    <property type="term" value="C:vacuolar membrane"/>
    <property type="evidence" value="ECO:0000314"/>
    <property type="project" value="PomBase"/>
</dbReference>
<dbReference type="GO" id="GO:0140786">
    <property type="term" value="F:glutamine sensor activity"/>
    <property type="evidence" value="ECO:0000266"/>
    <property type="project" value="PomBase"/>
</dbReference>
<dbReference type="GO" id="GO:0035091">
    <property type="term" value="F:phosphatidylinositol binding"/>
    <property type="evidence" value="ECO:0000255"/>
    <property type="project" value="PomBase"/>
</dbReference>
<dbReference type="GO" id="GO:0008270">
    <property type="term" value="F:zinc ion binding"/>
    <property type="evidence" value="ECO:0007669"/>
    <property type="project" value="UniProtKB-KW"/>
</dbReference>
<dbReference type="GO" id="GO:1904263">
    <property type="term" value="P:positive regulation of TORC1 signaling"/>
    <property type="evidence" value="ECO:0000314"/>
    <property type="project" value="PomBase"/>
</dbReference>
<dbReference type="GO" id="GO:0007165">
    <property type="term" value="P:signal transduction"/>
    <property type="evidence" value="ECO:0007669"/>
    <property type="project" value="UniProtKB-KW"/>
</dbReference>
<dbReference type="CDD" id="cd15736">
    <property type="entry name" value="FYVE_scVPS27p_Vac1p_like"/>
    <property type="match status" value="1"/>
</dbReference>
<dbReference type="FunFam" id="3.30.40.10:FF:000925">
    <property type="entry name" value="Zinc finger protein, putative"/>
    <property type="match status" value="1"/>
</dbReference>
<dbReference type="Gene3D" id="3.30.40.10">
    <property type="entry name" value="Zinc/RING finger domain, C3HC4 (zinc finger)"/>
    <property type="match status" value="1"/>
</dbReference>
<dbReference type="InterPro" id="IPR000306">
    <property type="entry name" value="Znf_FYVE"/>
</dbReference>
<dbReference type="InterPro" id="IPR017455">
    <property type="entry name" value="Znf_FYVE-rel"/>
</dbReference>
<dbReference type="InterPro" id="IPR011011">
    <property type="entry name" value="Znf_FYVE_PHD"/>
</dbReference>
<dbReference type="InterPro" id="IPR013083">
    <property type="entry name" value="Znf_RING/FYVE/PHD"/>
</dbReference>
<dbReference type="PANTHER" id="PTHR46319">
    <property type="entry name" value="ZINC FINGER FYVE DOMAIN-CONTAINING PROTEIN"/>
    <property type="match status" value="1"/>
</dbReference>
<dbReference type="PANTHER" id="PTHR46319:SF3">
    <property type="entry name" value="ZINC FINGER FYVE DOMAIN-CONTAINING PROTEIN"/>
    <property type="match status" value="1"/>
</dbReference>
<dbReference type="Pfam" id="PF01363">
    <property type="entry name" value="FYVE"/>
    <property type="match status" value="1"/>
</dbReference>
<dbReference type="SMART" id="SM00064">
    <property type="entry name" value="FYVE"/>
    <property type="match status" value="1"/>
</dbReference>
<dbReference type="SUPFAM" id="SSF57903">
    <property type="entry name" value="FYVE/PHD zinc finger"/>
    <property type="match status" value="1"/>
</dbReference>
<dbReference type="PROSITE" id="PS50178">
    <property type="entry name" value="ZF_FYVE"/>
    <property type="match status" value="1"/>
</dbReference>
<proteinExistence type="evidence at protein level"/>
<feature type="chain" id="PRO_0000357025" description="Glutamine sensor pib2">
    <location>
        <begin position="1"/>
        <end position="293"/>
    </location>
</feature>
<feature type="zinc finger region" description="FYVE-type; degenerate" evidence="2">
    <location>
        <begin position="156"/>
        <end position="220"/>
    </location>
</feature>
<feature type="region of interest" description="Disordered" evidence="3">
    <location>
        <begin position="38"/>
        <end position="75"/>
    </location>
</feature>
<feature type="region of interest" description="Disordered" evidence="3">
    <location>
        <begin position="242"/>
        <end position="276"/>
    </location>
</feature>
<feature type="compositionally biased region" description="Low complexity" evidence="3">
    <location>
        <begin position="44"/>
        <end position="62"/>
    </location>
</feature>
<feature type="compositionally biased region" description="Polar residues" evidence="3">
    <location>
        <begin position="63"/>
        <end position="75"/>
    </location>
</feature>
<feature type="compositionally biased region" description="Polar residues" evidence="3">
    <location>
        <begin position="242"/>
        <end position="256"/>
    </location>
</feature>
<feature type="binding site" evidence="2">
    <location>
        <position position="178"/>
    </location>
    <ligand>
        <name>Zn(2+)</name>
        <dbReference type="ChEBI" id="CHEBI:29105"/>
    </ligand>
</feature>
<feature type="binding site" evidence="2">
    <location>
        <position position="181"/>
    </location>
    <ligand>
        <name>Zn(2+)</name>
        <dbReference type="ChEBI" id="CHEBI:29105"/>
    </ligand>
</feature>
<feature type="binding site" evidence="2">
    <location>
        <position position="212"/>
    </location>
    <ligand>
        <name>Zn(2+)</name>
        <dbReference type="ChEBI" id="CHEBI:29105"/>
    </ligand>
</feature>
<feature type="binding site" evidence="2">
    <location>
        <position position="215"/>
    </location>
    <ligand>
        <name>Zn(2+)</name>
        <dbReference type="ChEBI" id="CHEBI:29105"/>
    </ligand>
</feature>
<feature type="modified residue" description="Phosphoserine" evidence="5">
    <location>
        <position position="259"/>
    </location>
</feature>
<sequence>MTTVHQLSGHGPLSRLNIYSGASPYTQRVRPSYELIEAPTRQATNGTGSVSGSPNSSSNSTPANQGSLPSHTNPQLYSSITRKERPELFRSYSGNPRLSKPYASSKLAASSRTASYQAMSYSVSPTSTNSSVATSLNYQSSRETGISKDHWKPDSDVSVCSFPSCSVRFGLFDRRHHCRRCGDIFCALHCDRNIPLTMDVKFCLAGSLYRSCVSCFYEYLKWKQSIDLASSNDITVIESTIAPQQATTHPPSQPKNAVSVPIPKMDSTDSKGELPSESLVLGTVPDNWVWSTF</sequence>
<protein>
    <recommendedName>
        <fullName evidence="1">Glutamine sensor pib2</fullName>
    </recommendedName>
</protein>
<organism>
    <name type="scientific">Schizosaccharomyces pombe (strain 972 / ATCC 24843)</name>
    <name type="common">Fission yeast</name>
    <dbReference type="NCBI Taxonomy" id="284812"/>
    <lineage>
        <taxon>Eukaryota</taxon>
        <taxon>Fungi</taxon>
        <taxon>Dikarya</taxon>
        <taxon>Ascomycota</taxon>
        <taxon>Taphrinomycotina</taxon>
        <taxon>Schizosaccharomycetes</taxon>
        <taxon>Schizosaccharomycetales</taxon>
        <taxon>Schizosaccharomycetaceae</taxon>
        <taxon>Schizosaccharomyces</taxon>
    </lineage>
</organism>
<comment type="function">
    <text evidence="1">Functions as an intracellular glutamine sensor that directly activates the TORC1 signaling pathway, to promote cell growth when glutamine is available.</text>
</comment>
<comment type="activity regulation">
    <text evidence="1">Activated by glutamine.</text>
</comment>
<comment type="subunit">
    <text evidence="1">Interacts with the TORC1 complex when activated by glutamine or cysteine.</text>
</comment>
<comment type="subcellular location">
    <subcellularLocation>
        <location evidence="4">Vacuole membrane</location>
        <topology evidence="4">Peripheral membrane protein</topology>
    </subcellularLocation>
</comment>
<comment type="domain">
    <text evidence="1">The FYVE-type zinc finger domain contributes to vacuolar localization.</text>
</comment>
<keyword id="KW-0472">Membrane</keyword>
<keyword id="KW-0479">Metal-binding</keyword>
<keyword id="KW-0597">Phosphoprotein</keyword>
<keyword id="KW-1185">Reference proteome</keyword>
<keyword id="KW-0807">Transducer</keyword>
<keyword id="KW-0926">Vacuole</keyword>
<keyword id="KW-0862">Zinc</keyword>
<keyword id="KW-0863">Zinc-finger</keyword>
<name>PIB2_SCHPO</name>
<reference key="1">
    <citation type="journal article" date="2002" name="Nature">
        <title>The genome sequence of Schizosaccharomyces pombe.</title>
        <authorList>
            <person name="Wood V."/>
            <person name="Gwilliam R."/>
            <person name="Rajandream M.A."/>
            <person name="Lyne M.H."/>
            <person name="Lyne R."/>
            <person name="Stewart A."/>
            <person name="Sgouros J.G."/>
            <person name="Peat N."/>
            <person name="Hayles J."/>
            <person name="Baker S.G."/>
            <person name="Basham D."/>
            <person name="Bowman S."/>
            <person name="Brooks K."/>
            <person name="Brown D."/>
            <person name="Brown S."/>
            <person name="Chillingworth T."/>
            <person name="Churcher C.M."/>
            <person name="Collins M."/>
            <person name="Connor R."/>
            <person name="Cronin A."/>
            <person name="Davis P."/>
            <person name="Feltwell T."/>
            <person name="Fraser A."/>
            <person name="Gentles S."/>
            <person name="Goble A."/>
            <person name="Hamlin N."/>
            <person name="Harris D.E."/>
            <person name="Hidalgo J."/>
            <person name="Hodgson G."/>
            <person name="Holroyd S."/>
            <person name="Hornsby T."/>
            <person name="Howarth S."/>
            <person name="Huckle E.J."/>
            <person name="Hunt S."/>
            <person name="Jagels K."/>
            <person name="James K.D."/>
            <person name="Jones L."/>
            <person name="Jones M."/>
            <person name="Leather S."/>
            <person name="McDonald S."/>
            <person name="McLean J."/>
            <person name="Mooney P."/>
            <person name="Moule S."/>
            <person name="Mungall K.L."/>
            <person name="Murphy L.D."/>
            <person name="Niblett D."/>
            <person name="Odell C."/>
            <person name="Oliver K."/>
            <person name="O'Neil S."/>
            <person name="Pearson D."/>
            <person name="Quail M.A."/>
            <person name="Rabbinowitsch E."/>
            <person name="Rutherford K.M."/>
            <person name="Rutter S."/>
            <person name="Saunders D."/>
            <person name="Seeger K."/>
            <person name="Sharp S."/>
            <person name="Skelton J."/>
            <person name="Simmonds M.N."/>
            <person name="Squares R."/>
            <person name="Squares S."/>
            <person name="Stevens K."/>
            <person name="Taylor K."/>
            <person name="Taylor R.G."/>
            <person name="Tivey A."/>
            <person name="Walsh S.V."/>
            <person name="Warren T."/>
            <person name="Whitehead S."/>
            <person name="Woodward J.R."/>
            <person name="Volckaert G."/>
            <person name="Aert R."/>
            <person name="Robben J."/>
            <person name="Grymonprez B."/>
            <person name="Weltjens I."/>
            <person name="Vanstreels E."/>
            <person name="Rieger M."/>
            <person name="Schaefer M."/>
            <person name="Mueller-Auer S."/>
            <person name="Gabel C."/>
            <person name="Fuchs M."/>
            <person name="Duesterhoeft A."/>
            <person name="Fritzc C."/>
            <person name="Holzer E."/>
            <person name="Moestl D."/>
            <person name="Hilbert H."/>
            <person name="Borzym K."/>
            <person name="Langer I."/>
            <person name="Beck A."/>
            <person name="Lehrach H."/>
            <person name="Reinhardt R."/>
            <person name="Pohl T.M."/>
            <person name="Eger P."/>
            <person name="Zimmermann W."/>
            <person name="Wedler H."/>
            <person name="Wambutt R."/>
            <person name="Purnelle B."/>
            <person name="Goffeau A."/>
            <person name="Cadieu E."/>
            <person name="Dreano S."/>
            <person name="Gloux S."/>
            <person name="Lelaure V."/>
            <person name="Mottier S."/>
            <person name="Galibert F."/>
            <person name="Aves S.J."/>
            <person name="Xiang Z."/>
            <person name="Hunt C."/>
            <person name="Moore K."/>
            <person name="Hurst S.M."/>
            <person name="Lucas M."/>
            <person name="Rochet M."/>
            <person name="Gaillardin C."/>
            <person name="Tallada V.A."/>
            <person name="Garzon A."/>
            <person name="Thode G."/>
            <person name="Daga R.R."/>
            <person name="Cruzado L."/>
            <person name="Jimenez J."/>
            <person name="Sanchez M."/>
            <person name="del Rey F."/>
            <person name="Benito J."/>
            <person name="Dominguez A."/>
            <person name="Revuelta J.L."/>
            <person name="Moreno S."/>
            <person name="Armstrong J."/>
            <person name="Forsburg S.L."/>
            <person name="Cerutti L."/>
            <person name="Lowe T."/>
            <person name="McCombie W.R."/>
            <person name="Paulsen I."/>
            <person name="Potashkin J."/>
            <person name="Shpakovski G.V."/>
            <person name="Ussery D."/>
            <person name="Barrell B.G."/>
            <person name="Nurse P."/>
        </authorList>
    </citation>
    <scope>NUCLEOTIDE SEQUENCE [LARGE SCALE GENOMIC DNA]</scope>
    <source>
        <strain>972 / ATCC 24843</strain>
    </source>
</reference>
<reference key="2">
    <citation type="journal article" date="2006" name="Nat. Biotechnol.">
        <title>ORFeome cloning and global analysis of protein localization in the fission yeast Schizosaccharomyces pombe.</title>
        <authorList>
            <person name="Matsuyama A."/>
            <person name="Arai R."/>
            <person name="Yashiroda Y."/>
            <person name="Shirai A."/>
            <person name="Kamata A."/>
            <person name="Sekido S."/>
            <person name="Kobayashi Y."/>
            <person name="Hashimoto A."/>
            <person name="Hamamoto M."/>
            <person name="Hiraoka Y."/>
            <person name="Horinouchi S."/>
            <person name="Yoshida M."/>
        </authorList>
    </citation>
    <scope>SUBCELLULAR LOCATION [LARGE SCALE ANALYSIS]</scope>
</reference>
<reference key="3">
    <citation type="journal article" date="2008" name="J. Proteome Res.">
        <title>Phosphoproteome analysis of fission yeast.</title>
        <authorList>
            <person name="Wilson-Grady J.T."/>
            <person name="Villen J."/>
            <person name="Gygi S.P."/>
        </authorList>
    </citation>
    <scope>PHOSPHORYLATION [LARGE SCALE ANALYSIS] AT SER-259</scope>
    <scope>IDENTIFICATION BY MASS SPECTROMETRY</scope>
</reference>
<gene>
    <name evidence="6" type="primary">pib2</name>
    <name evidence="6" type="ORF">SPBC9B6.03</name>
</gene>